<organism>
    <name type="scientific">Clostridium perfringens (strain SM101 / Type A)</name>
    <dbReference type="NCBI Taxonomy" id="289380"/>
    <lineage>
        <taxon>Bacteria</taxon>
        <taxon>Bacillati</taxon>
        <taxon>Bacillota</taxon>
        <taxon>Clostridia</taxon>
        <taxon>Eubacteriales</taxon>
        <taxon>Clostridiaceae</taxon>
        <taxon>Clostridium</taxon>
    </lineage>
</organism>
<keyword id="KW-0413">Isomerase</keyword>
<keyword id="KW-0663">Pyridoxal phosphate</keyword>
<sequence>MDICVRPVWAEIDLDIIANNMKEIRNLVGEKEIIAVVKANAYGHGALDIASTLLENGASRLAVAIITEADELRDAGITAPIMILGYTPINFAENLINNEIEQTVYDVEYAKELSDFALKLGKKAKIHIAIDTGMGRIGFLPNEEGLNKVLEICSLPGVEVVGLFTHFSTSDEKDKTYTYEQFSKLTNFNKALEDNGIHIPLKHASNSGAIMDLPETYLDGVRCGIISYGYYPSEEVKKENLKLKPALTLKTNVAFVKELDEDMYVSYGRTYKTEKKSKIATLPIGYADGYSRLLSGKAKVIIKGQFANVIGRVCMDQCMVDVTHIEDVKIGDEVILLGEENGLKFDANDMAEIMGTINYEILCMISHRVPRIYKKNNEIVKVRNYI</sequence>
<proteinExistence type="inferred from homology"/>
<accession>Q0SUN0</accession>
<feature type="chain" id="PRO_1000065981" description="Alanine racemase">
    <location>
        <begin position="1"/>
        <end position="386"/>
    </location>
</feature>
<feature type="active site" description="Proton acceptor; specific for D-alanine" evidence="1">
    <location>
        <position position="38"/>
    </location>
</feature>
<feature type="active site" description="Proton acceptor; specific for L-alanine" evidence="1">
    <location>
        <position position="267"/>
    </location>
</feature>
<feature type="binding site" evidence="1">
    <location>
        <position position="136"/>
    </location>
    <ligand>
        <name>substrate</name>
    </ligand>
</feature>
<feature type="binding site" evidence="1">
    <location>
        <position position="315"/>
    </location>
    <ligand>
        <name>substrate</name>
    </ligand>
</feature>
<feature type="modified residue" description="N6-(pyridoxal phosphate)lysine" evidence="1">
    <location>
        <position position="38"/>
    </location>
</feature>
<reference key="1">
    <citation type="journal article" date="2006" name="Genome Res.">
        <title>Skewed genomic variability in strains of the toxigenic bacterial pathogen, Clostridium perfringens.</title>
        <authorList>
            <person name="Myers G.S.A."/>
            <person name="Rasko D.A."/>
            <person name="Cheung J.K."/>
            <person name="Ravel J."/>
            <person name="Seshadri R."/>
            <person name="DeBoy R.T."/>
            <person name="Ren Q."/>
            <person name="Varga J."/>
            <person name="Awad M.M."/>
            <person name="Brinkac L.M."/>
            <person name="Daugherty S.C."/>
            <person name="Haft D.H."/>
            <person name="Dodson R.J."/>
            <person name="Madupu R."/>
            <person name="Nelson W.C."/>
            <person name="Rosovitz M.J."/>
            <person name="Sullivan S.A."/>
            <person name="Khouri H."/>
            <person name="Dimitrov G.I."/>
            <person name="Watkins K.L."/>
            <person name="Mulligan S."/>
            <person name="Benton J."/>
            <person name="Radune D."/>
            <person name="Fisher D.J."/>
            <person name="Atkins H.S."/>
            <person name="Hiscox T."/>
            <person name="Jost B.H."/>
            <person name="Billington S.J."/>
            <person name="Songer J.G."/>
            <person name="McClane B.A."/>
            <person name="Titball R.W."/>
            <person name="Rood J.I."/>
            <person name="Melville S.B."/>
            <person name="Paulsen I.T."/>
        </authorList>
    </citation>
    <scope>NUCLEOTIDE SEQUENCE [LARGE SCALE GENOMIC DNA]</scope>
    <source>
        <strain>SM101 / Type A</strain>
    </source>
</reference>
<protein>
    <recommendedName>
        <fullName evidence="1">Alanine racemase</fullName>
        <ecNumber evidence="1">5.1.1.1</ecNumber>
    </recommendedName>
</protein>
<gene>
    <name type="primary">alr</name>
    <name type="ordered locus">CPR_0852</name>
</gene>
<dbReference type="EC" id="5.1.1.1" evidence="1"/>
<dbReference type="EMBL" id="CP000312">
    <property type="protein sequence ID" value="ABG85889.1"/>
    <property type="molecule type" value="Genomic_DNA"/>
</dbReference>
<dbReference type="RefSeq" id="WP_011591906.1">
    <property type="nucleotide sequence ID" value="NC_008262.1"/>
</dbReference>
<dbReference type="SMR" id="Q0SUN0"/>
<dbReference type="KEGG" id="cpr:CPR_0852"/>
<dbReference type="UniPathway" id="UPA00042">
    <property type="reaction ID" value="UER00497"/>
</dbReference>
<dbReference type="Proteomes" id="UP000001824">
    <property type="component" value="Chromosome"/>
</dbReference>
<dbReference type="GO" id="GO:0005829">
    <property type="term" value="C:cytosol"/>
    <property type="evidence" value="ECO:0007669"/>
    <property type="project" value="TreeGrafter"/>
</dbReference>
<dbReference type="GO" id="GO:0008784">
    <property type="term" value="F:alanine racemase activity"/>
    <property type="evidence" value="ECO:0007669"/>
    <property type="project" value="UniProtKB-UniRule"/>
</dbReference>
<dbReference type="GO" id="GO:0030170">
    <property type="term" value="F:pyridoxal phosphate binding"/>
    <property type="evidence" value="ECO:0007669"/>
    <property type="project" value="UniProtKB-UniRule"/>
</dbReference>
<dbReference type="GO" id="GO:0030632">
    <property type="term" value="P:D-alanine biosynthetic process"/>
    <property type="evidence" value="ECO:0007669"/>
    <property type="project" value="UniProtKB-UniRule"/>
</dbReference>
<dbReference type="GO" id="GO:0009252">
    <property type="term" value="P:peptidoglycan biosynthetic process"/>
    <property type="evidence" value="ECO:0007669"/>
    <property type="project" value="TreeGrafter"/>
</dbReference>
<dbReference type="CDD" id="cd00430">
    <property type="entry name" value="PLPDE_III_AR"/>
    <property type="match status" value="1"/>
</dbReference>
<dbReference type="FunFam" id="2.40.37.10:FF:000006">
    <property type="entry name" value="Alanine racemase"/>
    <property type="match status" value="1"/>
</dbReference>
<dbReference type="FunFam" id="3.20.20.10:FF:000002">
    <property type="entry name" value="Alanine racemase"/>
    <property type="match status" value="1"/>
</dbReference>
<dbReference type="Gene3D" id="3.20.20.10">
    <property type="entry name" value="Alanine racemase"/>
    <property type="match status" value="1"/>
</dbReference>
<dbReference type="Gene3D" id="2.40.37.10">
    <property type="entry name" value="Lyase, Ornithine Decarboxylase, Chain A, domain 1"/>
    <property type="match status" value="1"/>
</dbReference>
<dbReference type="HAMAP" id="MF_01201">
    <property type="entry name" value="Ala_racemase"/>
    <property type="match status" value="1"/>
</dbReference>
<dbReference type="InterPro" id="IPR000821">
    <property type="entry name" value="Ala_racemase"/>
</dbReference>
<dbReference type="InterPro" id="IPR009006">
    <property type="entry name" value="Ala_racemase/Decarboxylase_C"/>
</dbReference>
<dbReference type="InterPro" id="IPR011079">
    <property type="entry name" value="Ala_racemase_C"/>
</dbReference>
<dbReference type="InterPro" id="IPR001608">
    <property type="entry name" value="Ala_racemase_N"/>
</dbReference>
<dbReference type="InterPro" id="IPR020622">
    <property type="entry name" value="Ala_racemase_pyridoxalP-BS"/>
</dbReference>
<dbReference type="InterPro" id="IPR029066">
    <property type="entry name" value="PLP-binding_barrel"/>
</dbReference>
<dbReference type="NCBIfam" id="TIGR00492">
    <property type="entry name" value="alr"/>
    <property type="match status" value="1"/>
</dbReference>
<dbReference type="PANTHER" id="PTHR30511">
    <property type="entry name" value="ALANINE RACEMASE"/>
    <property type="match status" value="1"/>
</dbReference>
<dbReference type="PANTHER" id="PTHR30511:SF0">
    <property type="entry name" value="ALANINE RACEMASE, CATABOLIC-RELATED"/>
    <property type="match status" value="1"/>
</dbReference>
<dbReference type="Pfam" id="PF00842">
    <property type="entry name" value="Ala_racemase_C"/>
    <property type="match status" value="1"/>
</dbReference>
<dbReference type="Pfam" id="PF01168">
    <property type="entry name" value="Ala_racemase_N"/>
    <property type="match status" value="1"/>
</dbReference>
<dbReference type="PRINTS" id="PR00992">
    <property type="entry name" value="ALARACEMASE"/>
</dbReference>
<dbReference type="SMART" id="SM01005">
    <property type="entry name" value="Ala_racemase_C"/>
    <property type="match status" value="1"/>
</dbReference>
<dbReference type="SUPFAM" id="SSF50621">
    <property type="entry name" value="Alanine racemase C-terminal domain-like"/>
    <property type="match status" value="1"/>
</dbReference>
<dbReference type="SUPFAM" id="SSF51419">
    <property type="entry name" value="PLP-binding barrel"/>
    <property type="match status" value="1"/>
</dbReference>
<dbReference type="PROSITE" id="PS00395">
    <property type="entry name" value="ALANINE_RACEMASE"/>
    <property type="match status" value="1"/>
</dbReference>
<evidence type="ECO:0000255" key="1">
    <source>
        <dbReference type="HAMAP-Rule" id="MF_01201"/>
    </source>
</evidence>
<comment type="function">
    <text evidence="1">Catalyzes the interconversion of L-alanine and D-alanine. May also act on other amino acids.</text>
</comment>
<comment type="catalytic activity">
    <reaction evidence="1">
        <text>L-alanine = D-alanine</text>
        <dbReference type="Rhea" id="RHEA:20249"/>
        <dbReference type="ChEBI" id="CHEBI:57416"/>
        <dbReference type="ChEBI" id="CHEBI:57972"/>
        <dbReference type="EC" id="5.1.1.1"/>
    </reaction>
</comment>
<comment type="cofactor">
    <cofactor evidence="1">
        <name>pyridoxal 5'-phosphate</name>
        <dbReference type="ChEBI" id="CHEBI:597326"/>
    </cofactor>
</comment>
<comment type="pathway">
    <text evidence="1">Amino-acid biosynthesis; D-alanine biosynthesis; D-alanine from L-alanine: step 1/1.</text>
</comment>
<comment type="similarity">
    <text evidence="1">Belongs to the alanine racemase family.</text>
</comment>
<name>ALR_CLOPS</name>